<evidence type="ECO:0000250" key="1">
    <source>
        <dbReference type="UniProtKB" id="P56780"/>
    </source>
</evidence>
<evidence type="ECO:0000255" key="2">
    <source>
        <dbReference type="HAMAP-Rule" id="MF_00752"/>
    </source>
</evidence>
<evidence type="ECO:0000256" key="3">
    <source>
        <dbReference type="SAM" id="MobiDB-lite"/>
    </source>
</evidence>
<sequence>MATQTVENSSRSGPRRTAVGDLLKPLNSEYGKVAPGWGTTPLMGVAMALFAVFLSIILEIYNSSVLLDGISMN</sequence>
<dbReference type="EMBL" id="AB237912">
    <property type="protein sequence ID" value="BAE46683.1"/>
    <property type="molecule type" value="Genomic_DNA"/>
</dbReference>
<dbReference type="RefSeq" id="YP_358707.1">
    <property type="nucleotide sequence ID" value="NC_007500.1"/>
</dbReference>
<dbReference type="SMR" id="Q3C1M6"/>
<dbReference type="GeneID" id="3735107"/>
<dbReference type="KEGG" id="nsy:3735107"/>
<dbReference type="OrthoDB" id="19416at4085"/>
<dbReference type="Proteomes" id="UP000189701">
    <property type="component" value="Chloroplast Pltd"/>
</dbReference>
<dbReference type="GO" id="GO:0009535">
    <property type="term" value="C:chloroplast thylakoid membrane"/>
    <property type="evidence" value="ECO:0007669"/>
    <property type="project" value="UniProtKB-SubCell"/>
</dbReference>
<dbReference type="GO" id="GO:0009523">
    <property type="term" value="C:photosystem II"/>
    <property type="evidence" value="ECO:0007669"/>
    <property type="project" value="UniProtKB-KW"/>
</dbReference>
<dbReference type="GO" id="GO:0042301">
    <property type="term" value="F:phosphate ion binding"/>
    <property type="evidence" value="ECO:0007669"/>
    <property type="project" value="InterPro"/>
</dbReference>
<dbReference type="GO" id="GO:0015979">
    <property type="term" value="P:photosynthesis"/>
    <property type="evidence" value="ECO:0007669"/>
    <property type="project" value="UniProtKB-UniRule"/>
</dbReference>
<dbReference type="GO" id="GO:0050821">
    <property type="term" value="P:protein stabilization"/>
    <property type="evidence" value="ECO:0007669"/>
    <property type="project" value="InterPro"/>
</dbReference>
<dbReference type="FunFam" id="1.20.5.880:FF:000001">
    <property type="entry name" value="Photosystem II reaction center protein H"/>
    <property type="match status" value="1"/>
</dbReference>
<dbReference type="Gene3D" id="1.20.5.880">
    <property type="entry name" value="Photosystem II reaction center protein H"/>
    <property type="match status" value="1"/>
</dbReference>
<dbReference type="HAMAP" id="MF_00752">
    <property type="entry name" value="PSII_PsbH"/>
    <property type="match status" value="1"/>
</dbReference>
<dbReference type="InterPro" id="IPR001056">
    <property type="entry name" value="PSII_PsbH"/>
</dbReference>
<dbReference type="InterPro" id="IPR036863">
    <property type="entry name" value="PSII_PsbH_sf"/>
</dbReference>
<dbReference type="NCBIfam" id="NF002728">
    <property type="entry name" value="PRK02624.1"/>
    <property type="match status" value="1"/>
</dbReference>
<dbReference type="PANTHER" id="PTHR34469">
    <property type="entry name" value="PHOTOSYSTEM II REACTION CENTER PROTEIN H"/>
    <property type="match status" value="1"/>
</dbReference>
<dbReference type="PANTHER" id="PTHR34469:SF4">
    <property type="entry name" value="PHOTOSYSTEM II REACTION CENTER PROTEIN H"/>
    <property type="match status" value="1"/>
</dbReference>
<dbReference type="Pfam" id="PF00737">
    <property type="entry name" value="PsbH"/>
    <property type="match status" value="1"/>
</dbReference>
<dbReference type="SUPFAM" id="SSF161025">
    <property type="entry name" value="Photosystem II 10 kDa phosphoprotein PsbH"/>
    <property type="match status" value="1"/>
</dbReference>
<protein>
    <recommendedName>
        <fullName evidence="2">Photosystem II reaction center protein H</fullName>
        <shortName evidence="2">PSII-H</shortName>
    </recommendedName>
    <alternativeName>
        <fullName evidence="2">Photosystem II 10 kDa phosphoprotein</fullName>
    </alternativeName>
</protein>
<accession>Q3C1M6</accession>
<keyword id="KW-0150">Chloroplast</keyword>
<keyword id="KW-0472">Membrane</keyword>
<keyword id="KW-0597">Phosphoprotein</keyword>
<keyword id="KW-0602">Photosynthesis</keyword>
<keyword id="KW-0604">Photosystem II</keyword>
<keyword id="KW-0934">Plastid</keyword>
<keyword id="KW-1185">Reference proteome</keyword>
<keyword id="KW-0793">Thylakoid</keyword>
<keyword id="KW-0812">Transmembrane</keyword>
<keyword id="KW-1133">Transmembrane helix</keyword>
<name>PSBH_NICSY</name>
<geneLocation type="chloroplast"/>
<comment type="function">
    <text evidence="2">One of the components of the core complex of photosystem II (PSII), required for its stability and/or assembly. PSII is a light-driven water:plastoquinone oxidoreductase that uses light energy to abstract electrons from H(2)O, generating O(2) and a proton gradient subsequently used for ATP formation. It consists of a core antenna complex that captures photons, and an electron transfer chain that converts photonic excitation into a charge separation.</text>
</comment>
<comment type="subunit">
    <text evidence="2">PSII is composed of 1 copy each of membrane proteins PsbA, PsbB, PsbC, PsbD, PsbE, PsbF, PsbH, PsbI, PsbJ, PsbK, PsbL, PsbM, PsbT, PsbX, PsbY, PsbZ, Psb30/Ycf12, at least 3 peripheral proteins of the oxygen-evolving complex and a large number of cofactors. It forms dimeric complexes.</text>
</comment>
<comment type="subcellular location">
    <subcellularLocation>
        <location evidence="2">Plastid</location>
        <location evidence="2">Chloroplast thylakoid membrane</location>
        <topology evidence="2">Single-pass membrane protein</topology>
    </subcellularLocation>
</comment>
<comment type="PTM">
    <text evidence="2">Phosphorylation is a light-dependent reaction catalyzed by a membrane-bound kinase; phosphorylation occurs on Thr residue(s) in the N-terminus of the protein.</text>
</comment>
<comment type="similarity">
    <text evidence="2">Belongs to the PsbH family.</text>
</comment>
<gene>
    <name evidence="2" type="primary">psbH</name>
</gene>
<reference key="1">
    <citation type="journal article" date="2006" name="Mol. Genet. Genomics">
        <title>The chloroplast genome of Nicotiana sylvestris and Nicotiana tomentosiformis: complete sequencing confirms that the Nicotiana sylvestris progenitor is the maternal genome donor of Nicotiana tabacum.</title>
        <authorList>
            <person name="Yukawa M."/>
            <person name="Tsudzuki T."/>
            <person name="Sugiura M."/>
        </authorList>
    </citation>
    <scope>NUCLEOTIDE SEQUENCE [LARGE SCALE GENOMIC DNA]</scope>
</reference>
<organism>
    <name type="scientific">Nicotiana sylvestris</name>
    <name type="common">Wood tobacco</name>
    <name type="synonym">South American tobacco</name>
    <dbReference type="NCBI Taxonomy" id="4096"/>
    <lineage>
        <taxon>Eukaryota</taxon>
        <taxon>Viridiplantae</taxon>
        <taxon>Streptophyta</taxon>
        <taxon>Embryophyta</taxon>
        <taxon>Tracheophyta</taxon>
        <taxon>Spermatophyta</taxon>
        <taxon>Magnoliopsida</taxon>
        <taxon>eudicotyledons</taxon>
        <taxon>Gunneridae</taxon>
        <taxon>Pentapetalae</taxon>
        <taxon>asterids</taxon>
        <taxon>lamiids</taxon>
        <taxon>Solanales</taxon>
        <taxon>Solanaceae</taxon>
        <taxon>Nicotianoideae</taxon>
        <taxon>Nicotianeae</taxon>
        <taxon>Nicotiana</taxon>
    </lineage>
</organism>
<feature type="initiator methionine" description="Removed" evidence="1">
    <location>
        <position position="1"/>
    </location>
</feature>
<feature type="chain" id="PRO_0000275762" description="Photosystem II reaction center protein H">
    <location>
        <begin position="2"/>
        <end position="73"/>
    </location>
</feature>
<feature type="transmembrane region" description="Helical" evidence="2">
    <location>
        <begin position="41"/>
        <end position="61"/>
    </location>
</feature>
<feature type="region of interest" description="Disordered" evidence="3">
    <location>
        <begin position="1"/>
        <end position="20"/>
    </location>
</feature>
<feature type="compositionally biased region" description="Polar residues" evidence="3">
    <location>
        <begin position="1"/>
        <end position="12"/>
    </location>
</feature>
<feature type="modified residue" description="Phosphothreonine" evidence="2">
    <location>
        <position position="3"/>
    </location>
</feature>
<feature type="modified residue" description="Phosphothreonine" evidence="2">
    <location>
        <position position="5"/>
    </location>
</feature>
<proteinExistence type="inferred from homology"/>